<feature type="chain" id="PRO_1000213053" description="UPF0352 protein PC1_1633">
    <location>
        <begin position="1"/>
        <end position="76"/>
    </location>
</feature>
<sequence length="76" mass="8414">MPQSSRYSDEHVEQLLSEMVNVLEKHHAPTDLALMVLGNMVTNLINTSIAPAQRQVMARSFAEALQASIKKADKAH</sequence>
<name>Y1633_PECCP</name>
<proteinExistence type="inferred from homology"/>
<gene>
    <name type="ordered locus">PC1_1633</name>
</gene>
<comment type="similarity">
    <text evidence="1">Belongs to the UPF0352 family.</text>
</comment>
<organism>
    <name type="scientific">Pectobacterium carotovorum subsp. carotovorum (strain PC1)</name>
    <dbReference type="NCBI Taxonomy" id="561230"/>
    <lineage>
        <taxon>Bacteria</taxon>
        <taxon>Pseudomonadati</taxon>
        <taxon>Pseudomonadota</taxon>
        <taxon>Gammaproteobacteria</taxon>
        <taxon>Enterobacterales</taxon>
        <taxon>Pectobacteriaceae</taxon>
        <taxon>Pectobacterium</taxon>
    </lineage>
</organism>
<accession>C6DEI9</accession>
<evidence type="ECO:0000255" key="1">
    <source>
        <dbReference type="HAMAP-Rule" id="MF_00816"/>
    </source>
</evidence>
<dbReference type="EMBL" id="CP001657">
    <property type="protein sequence ID" value="ACT12674.1"/>
    <property type="molecule type" value="Genomic_DNA"/>
</dbReference>
<dbReference type="RefSeq" id="WP_015839894.1">
    <property type="nucleotide sequence ID" value="NC_012917.1"/>
</dbReference>
<dbReference type="SMR" id="C6DEI9"/>
<dbReference type="STRING" id="561230.PC1_1633"/>
<dbReference type="KEGG" id="pct:PC1_1633"/>
<dbReference type="eggNOG" id="COG3082">
    <property type="taxonomic scope" value="Bacteria"/>
</dbReference>
<dbReference type="HOGENOM" id="CLU_175457_0_0_6"/>
<dbReference type="OrthoDB" id="5771474at2"/>
<dbReference type="Proteomes" id="UP000002736">
    <property type="component" value="Chromosome"/>
</dbReference>
<dbReference type="Gene3D" id="1.10.3390.10">
    <property type="entry name" value="YejL-like"/>
    <property type="match status" value="1"/>
</dbReference>
<dbReference type="HAMAP" id="MF_00816">
    <property type="entry name" value="UPF0352"/>
    <property type="match status" value="1"/>
</dbReference>
<dbReference type="InterPro" id="IPR009857">
    <property type="entry name" value="UPF0352"/>
</dbReference>
<dbReference type="InterPro" id="IPR023202">
    <property type="entry name" value="YejL_sf"/>
</dbReference>
<dbReference type="NCBIfam" id="NF010242">
    <property type="entry name" value="PRK13689.1"/>
    <property type="match status" value="1"/>
</dbReference>
<dbReference type="Pfam" id="PF07208">
    <property type="entry name" value="DUF1414"/>
    <property type="match status" value="1"/>
</dbReference>
<dbReference type="PIRSF" id="PIRSF006188">
    <property type="entry name" value="UCP006188"/>
    <property type="match status" value="1"/>
</dbReference>
<dbReference type="SUPFAM" id="SSF158651">
    <property type="entry name" value="YejL-like"/>
    <property type="match status" value="1"/>
</dbReference>
<reference key="1">
    <citation type="submission" date="2009-07" db="EMBL/GenBank/DDBJ databases">
        <title>Complete sequence of Pectobacterium carotovorum subsp. carotovorum PC1.</title>
        <authorList>
            <consortium name="US DOE Joint Genome Institute"/>
            <person name="Lucas S."/>
            <person name="Copeland A."/>
            <person name="Lapidus A."/>
            <person name="Glavina del Rio T."/>
            <person name="Tice H."/>
            <person name="Bruce D."/>
            <person name="Goodwin L."/>
            <person name="Pitluck S."/>
            <person name="Munk A.C."/>
            <person name="Brettin T."/>
            <person name="Detter J.C."/>
            <person name="Han C."/>
            <person name="Tapia R."/>
            <person name="Larimer F."/>
            <person name="Land M."/>
            <person name="Hauser L."/>
            <person name="Kyrpides N."/>
            <person name="Mikhailova N."/>
            <person name="Balakrishnan V."/>
            <person name="Glasner J."/>
            <person name="Perna N.T."/>
        </authorList>
    </citation>
    <scope>NUCLEOTIDE SEQUENCE [LARGE SCALE GENOMIC DNA]</scope>
    <source>
        <strain>PC1</strain>
    </source>
</reference>
<protein>
    <recommendedName>
        <fullName evidence="1">UPF0352 protein PC1_1633</fullName>
    </recommendedName>
</protein>